<dbReference type="EMBL" id="CP000312">
    <property type="protein sequence ID" value="ABG86480.1"/>
    <property type="molecule type" value="Genomic_DNA"/>
</dbReference>
<dbReference type="RefSeq" id="WP_011592864.1">
    <property type="nucleotide sequence ID" value="NC_008262.1"/>
</dbReference>
<dbReference type="SMR" id="Q0SRE3"/>
<dbReference type="KEGG" id="cpr:CPR_2005"/>
<dbReference type="Proteomes" id="UP000001824">
    <property type="component" value="Chromosome"/>
</dbReference>
<dbReference type="GO" id="GO:0005524">
    <property type="term" value="F:ATP binding"/>
    <property type="evidence" value="ECO:0007669"/>
    <property type="project" value="UniProtKB-UniRule"/>
</dbReference>
<dbReference type="GO" id="GO:0140662">
    <property type="term" value="F:ATP-dependent protein folding chaperone"/>
    <property type="evidence" value="ECO:0007669"/>
    <property type="project" value="InterPro"/>
</dbReference>
<dbReference type="GO" id="GO:0051082">
    <property type="term" value="F:unfolded protein binding"/>
    <property type="evidence" value="ECO:0007669"/>
    <property type="project" value="InterPro"/>
</dbReference>
<dbReference type="CDD" id="cd10234">
    <property type="entry name" value="ASKHA_NBD_HSP70_DnaK-like"/>
    <property type="match status" value="1"/>
</dbReference>
<dbReference type="FunFam" id="2.60.34.10:FF:000014">
    <property type="entry name" value="Chaperone protein DnaK HSP70"/>
    <property type="match status" value="1"/>
</dbReference>
<dbReference type="FunFam" id="1.20.1270.10:FF:000001">
    <property type="entry name" value="Molecular chaperone DnaK"/>
    <property type="match status" value="1"/>
</dbReference>
<dbReference type="FunFam" id="3.30.420.40:FF:000071">
    <property type="entry name" value="Molecular chaperone DnaK"/>
    <property type="match status" value="1"/>
</dbReference>
<dbReference type="FunFam" id="3.90.640.10:FF:000003">
    <property type="entry name" value="Molecular chaperone DnaK"/>
    <property type="match status" value="1"/>
</dbReference>
<dbReference type="Gene3D" id="1.20.1270.10">
    <property type="match status" value="1"/>
</dbReference>
<dbReference type="Gene3D" id="3.30.420.40">
    <property type="match status" value="2"/>
</dbReference>
<dbReference type="Gene3D" id="3.90.640.10">
    <property type="entry name" value="Actin, Chain A, domain 4"/>
    <property type="match status" value="1"/>
</dbReference>
<dbReference type="Gene3D" id="2.60.34.10">
    <property type="entry name" value="Substrate Binding Domain Of DNAk, Chain A, domain 1"/>
    <property type="match status" value="1"/>
</dbReference>
<dbReference type="HAMAP" id="MF_00332">
    <property type="entry name" value="DnaK"/>
    <property type="match status" value="1"/>
</dbReference>
<dbReference type="InterPro" id="IPR043129">
    <property type="entry name" value="ATPase_NBD"/>
</dbReference>
<dbReference type="InterPro" id="IPR012725">
    <property type="entry name" value="Chaperone_DnaK"/>
</dbReference>
<dbReference type="InterPro" id="IPR018181">
    <property type="entry name" value="Heat_shock_70_CS"/>
</dbReference>
<dbReference type="InterPro" id="IPR029048">
    <property type="entry name" value="HSP70_C_sf"/>
</dbReference>
<dbReference type="InterPro" id="IPR029047">
    <property type="entry name" value="HSP70_peptide-bd_sf"/>
</dbReference>
<dbReference type="InterPro" id="IPR013126">
    <property type="entry name" value="Hsp_70_fam"/>
</dbReference>
<dbReference type="NCBIfam" id="NF001413">
    <property type="entry name" value="PRK00290.1"/>
    <property type="match status" value="1"/>
</dbReference>
<dbReference type="NCBIfam" id="TIGR02350">
    <property type="entry name" value="prok_dnaK"/>
    <property type="match status" value="1"/>
</dbReference>
<dbReference type="PANTHER" id="PTHR19375">
    <property type="entry name" value="HEAT SHOCK PROTEIN 70KDA"/>
    <property type="match status" value="1"/>
</dbReference>
<dbReference type="Pfam" id="PF00012">
    <property type="entry name" value="HSP70"/>
    <property type="match status" value="1"/>
</dbReference>
<dbReference type="PRINTS" id="PR00301">
    <property type="entry name" value="HEATSHOCK70"/>
</dbReference>
<dbReference type="SUPFAM" id="SSF53067">
    <property type="entry name" value="Actin-like ATPase domain"/>
    <property type="match status" value="2"/>
</dbReference>
<dbReference type="SUPFAM" id="SSF100934">
    <property type="entry name" value="Heat shock protein 70kD (HSP70), C-terminal subdomain"/>
    <property type="match status" value="1"/>
</dbReference>
<dbReference type="SUPFAM" id="SSF100920">
    <property type="entry name" value="Heat shock protein 70kD (HSP70), peptide-binding domain"/>
    <property type="match status" value="1"/>
</dbReference>
<dbReference type="PROSITE" id="PS00297">
    <property type="entry name" value="HSP70_1"/>
    <property type="match status" value="1"/>
</dbReference>
<dbReference type="PROSITE" id="PS00329">
    <property type="entry name" value="HSP70_2"/>
    <property type="match status" value="1"/>
</dbReference>
<dbReference type="PROSITE" id="PS01036">
    <property type="entry name" value="HSP70_3"/>
    <property type="match status" value="1"/>
</dbReference>
<evidence type="ECO:0000255" key="1">
    <source>
        <dbReference type="HAMAP-Rule" id="MF_00332"/>
    </source>
</evidence>
<evidence type="ECO:0000256" key="2">
    <source>
        <dbReference type="SAM" id="MobiDB-lite"/>
    </source>
</evidence>
<proteinExistence type="inferred from homology"/>
<organism>
    <name type="scientific">Clostridium perfringens (strain SM101 / Type A)</name>
    <dbReference type="NCBI Taxonomy" id="289380"/>
    <lineage>
        <taxon>Bacteria</taxon>
        <taxon>Bacillati</taxon>
        <taxon>Bacillota</taxon>
        <taxon>Clostridia</taxon>
        <taxon>Eubacteriales</taxon>
        <taxon>Clostridiaceae</taxon>
        <taxon>Clostridium</taxon>
    </lineage>
</organism>
<gene>
    <name evidence="1" type="primary">dnaK</name>
    <name type="ordered locus">CPR_2005</name>
</gene>
<reference key="1">
    <citation type="journal article" date="2006" name="Genome Res.">
        <title>Skewed genomic variability in strains of the toxigenic bacterial pathogen, Clostridium perfringens.</title>
        <authorList>
            <person name="Myers G.S.A."/>
            <person name="Rasko D.A."/>
            <person name="Cheung J.K."/>
            <person name="Ravel J."/>
            <person name="Seshadri R."/>
            <person name="DeBoy R.T."/>
            <person name="Ren Q."/>
            <person name="Varga J."/>
            <person name="Awad M.M."/>
            <person name="Brinkac L.M."/>
            <person name="Daugherty S.C."/>
            <person name="Haft D.H."/>
            <person name="Dodson R.J."/>
            <person name="Madupu R."/>
            <person name="Nelson W.C."/>
            <person name="Rosovitz M.J."/>
            <person name="Sullivan S.A."/>
            <person name="Khouri H."/>
            <person name="Dimitrov G.I."/>
            <person name="Watkins K.L."/>
            <person name="Mulligan S."/>
            <person name="Benton J."/>
            <person name="Radune D."/>
            <person name="Fisher D.J."/>
            <person name="Atkins H.S."/>
            <person name="Hiscox T."/>
            <person name="Jost B.H."/>
            <person name="Billington S.J."/>
            <person name="Songer J.G."/>
            <person name="McClane B.A."/>
            <person name="Titball R.W."/>
            <person name="Rood J.I."/>
            <person name="Melville S.B."/>
            <person name="Paulsen I.T."/>
        </authorList>
    </citation>
    <scope>NUCLEOTIDE SEQUENCE [LARGE SCALE GENOMIC DNA]</scope>
    <source>
        <strain>SM101 / Type A</strain>
    </source>
</reference>
<name>DNAK_CLOPS</name>
<keyword id="KW-0067">ATP-binding</keyword>
<keyword id="KW-0143">Chaperone</keyword>
<keyword id="KW-0547">Nucleotide-binding</keyword>
<keyword id="KW-0597">Phosphoprotein</keyword>
<keyword id="KW-0346">Stress response</keyword>
<protein>
    <recommendedName>
        <fullName evidence="1">Chaperone protein DnaK</fullName>
    </recommendedName>
    <alternativeName>
        <fullName evidence="1">HSP70</fullName>
    </alternativeName>
    <alternativeName>
        <fullName evidence="1">Heat shock 70 kDa protein</fullName>
    </alternativeName>
    <alternativeName>
        <fullName evidence="1">Heat shock protein 70</fullName>
    </alternativeName>
</protein>
<feature type="chain" id="PRO_1000059545" description="Chaperone protein DnaK">
    <location>
        <begin position="1"/>
        <end position="619"/>
    </location>
</feature>
<feature type="region of interest" description="Disordered" evidence="2">
    <location>
        <begin position="578"/>
        <end position="619"/>
    </location>
</feature>
<feature type="compositionally biased region" description="Low complexity" evidence="2">
    <location>
        <begin position="589"/>
        <end position="606"/>
    </location>
</feature>
<feature type="compositionally biased region" description="Acidic residues" evidence="2">
    <location>
        <begin position="607"/>
        <end position="619"/>
    </location>
</feature>
<feature type="modified residue" description="Phosphothreonine; by autocatalysis" evidence="1">
    <location>
        <position position="175"/>
    </location>
</feature>
<sequence length="619" mass="66497">MSKIIGIDLGTTNSCVAVMEGGEPVVITNSEGARTTPSVVSFQANGERLVGQVAKRQAITNPEKTIMSIKRHMGTDYKVNIDGKDYTPQEISAMILQKLKADAEAYLGEKVTEAVITVPAYFNDAERQATKDAGRIAGLDVKRIINEPTAASLAYGLDKMDSAHKILVYDLGGGTFDVSILDLGDGVFEVVSTNGDARLGGDDFDQRIIDYIAEDFKAQNGIDLRQDKMALQRLKEAAEKAKIELSSSTQTLINLPFITADATGPKHIDMTLTRAKFNELTHDLVERTIDIMKEALKSGNVSLNDIDKVILVGGSTRIPAVQEAVKNFTGKEPSKGVNPDECVAMGAAIQAGVLTGDVKDVLLLDVTPLTLGIETLGGVATPLIERNTTIPARKSQIFSTAADNQTSVEIHVVQGERQMAADNKTLGRFTLSGIAPAPRGIPQIEVAFDIDANGIVKVSATDKATGKEANITITASTNLSDAEIDKAVKEAEQFAEEDKKRKEAIEVKNNAEQIVYQTEKTLNELGDKVSAEEKSEIEAKIEEVKKVKDGDDIEAIKKAMEDLTQAFYKISEKLYQQNGGAQGEGFDPNNMGGANAGTGAANSNDDNVVDADFEVQDDK</sequence>
<accession>Q0SRE3</accession>
<comment type="function">
    <text evidence="1">Acts as a chaperone.</text>
</comment>
<comment type="induction">
    <text evidence="1">By stress conditions e.g. heat shock.</text>
</comment>
<comment type="similarity">
    <text evidence="1">Belongs to the heat shock protein 70 family.</text>
</comment>